<geneLocation type="plasmid">
    <name>pSRL1</name>
</geneLocation>
<organism>
    <name type="scientific">Sphingobium indicum (strain DSM 16412 / CCM 7286 / MTCC 6364 / B90A)</name>
    <dbReference type="NCBI Taxonomy" id="861109"/>
    <lineage>
        <taxon>Bacteria</taxon>
        <taxon>Pseudomonadati</taxon>
        <taxon>Pseudomonadota</taxon>
        <taxon>Alphaproteobacteria</taxon>
        <taxon>Sphingomonadales</taxon>
        <taxon>Sphingomonadaceae</taxon>
        <taxon>Sphingobium</taxon>
    </lineage>
</organism>
<reference key="1">
    <citation type="journal article" date="2002" name="Appl. Environ. Microbiol.">
        <title>Cloning and characterization of lin genes responsible for the degradation of hexachlorocyclohexane isomers by Sphingomonas paucimobilis strain B90.</title>
        <authorList>
            <person name="Kumari R."/>
            <person name="Subudhi S."/>
            <person name="Suar M."/>
            <person name="Dhingra G."/>
            <person name="Raina V."/>
            <person name="Dogra C."/>
            <person name="Lal S."/>
            <person name="van der Meer J.R."/>
            <person name="Holliger C."/>
            <person name="Lal R."/>
        </authorList>
    </citation>
    <scope>NUCLEOTIDE SEQUENCE [GENOMIC DNA]</scope>
    <scope>FUNCTION</scope>
    <scope>CATALYTIC ACTIVITY</scope>
    <scope>PATHWAY</scope>
    <source>
        <strain>B90</strain>
    </source>
</reference>
<reference key="2">
    <citation type="journal article" date="2012" name="J. Bacteriol.">
        <title>Genome sequence of Sphingobium indicum B90A, a hexachlorocyclohexane-degrading bacterium.</title>
        <authorList>
            <person name="Anand S."/>
            <person name="Sangwan N."/>
            <person name="Lata P."/>
            <person name="Kaur J."/>
            <person name="Dua A."/>
            <person name="Singh A.K."/>
            <person name="Verma M."/>
            <person name="Kaur J."/>
            <person name="Khurana J.P."/>
            <person name="Khurana P."/>
            <person name="Mathur S."/>
            <person name="Lal R."/>
        </authorList>
    </citation>
    <scope>NUCLEOTIDE SEQUENCE [LARGE SCALE GENOMIC DNA]</scope>
    <source>
        <strain>DSM 16412 / CCM 7286 / MTCC 6364 / B90A</strain>
        <plasmid>pSRL1</plasmid>
    </source>
</reference>
<keyword id="KW-0216">Detoxification</keyword>
<keyword id="KW-0456">Lyase</keyword>
<keyword id="KW-0574">Periplasm</keyword>
<keyword id="KW-0614">Plasmid</keyword>
<proteinExistence type="evidence at protein level"/>
<feature type="chain" id="PRO_0000084434" description="Hexachlorocyclohexane dehydrochlorinase 1">
    <location>
        <begin position="1"/>
        <end position="154"/>
    </location>
</feature>
<feature type="active site" evidence="1">
    <location>
        <position position="25"/>
    </location>
</feature>
<feature type="active site" description="Proton acceptor" evidence="1">
    <location>
        <position position="73"/>
    </location>
</feature>
<feature type="sequence conflict" description="In Ref. 1; AAN64239." ref="1">
    <original>Y</original>
    <variation>F</variation>
    <location>
        <position position="68"/>
    </location>
</feature>
<protein>
    <recommendedName>
        <fullName evidence="3">Hexachlorocyclohexane dehydrochlorinase 1</fullName>
        <shortName evidence="3">HCH dehydrochlorinase 1</shortName>
        <ecNumber evidence="5">4.5.1.-</ecNumber>
    </recommendedName>
</protein>
<sequence length="154" mass="17145">MSDLDRLASRAAIQDLYSDQLIGVDKRQEGRLASIWWDDAEWTIEGIGTYKGPEGALDLANNVLWPMYHETIHYGTNLRLEFVSADKVNGIGDVLCLGNLVEGNQSILIAAVYTNEYERRDGVWKLSKLNGCMNYFTPLAGIHFAPPGALLQKS</sequence>
<gene>
    <name evidence="3" type="primary">linA1</name>
    <name evidence="6" type="ORF">SIDU_17865</name>
</gene>
<dbReference type="EC" id="4.5.1.-" evidence="5"/>
<dbReference type="EMBL" id="AY150579">
    <property type="protein sequence ID" value="AAN64239.1"/>
    <property type="molecule type" value="Genomic_DNA"/>
</dbReference>
<dbReference type="EMBL" id="CP013071">
    <property type="protein sequence ID" value="APL96514.1"/>
    <property type="molecule type" value="Genomic_DNA"/>
</dbReference>
<dbReference type="RefSeq" id="WP_073507206.1">
    <property type="nucleotide sequence ID" value="NZ_CP013071.1"/>
</dbReference>
<dbReference type="SMR" id="P59766"/>
<dbReference type="KEGG" id="sinb:SIDU_17865"/>
<dbReference type="BRENDA" id="4.5.1.B1">
    <property type="organism ID" value="8831"/>
</dbReference>
<dbReference type="UniPathway" id="UPA00690"/>
<dbReference type="Proteomes" id="UP000004550">
    <property type="component" value="Plasmid pSRL1"/>
</dbReference>
<dbReference type="GO" id="GO:0042597">
    <property type="term" value="C:periplasmic space"/>
    <property type="evidence" value="ECO:0007669"/>
    <property type="project" value="UniProtKB-SubCell"/>
</dbReference>
<dbReference type="GO" id="GO:0016829">
    <property type="term" value="F:lyase activity"/>
    <property type="evidence" value="ECO:0007669"/>
    <property type="project" value="UniProtKB-KW"/>
</dbReference>
<dbReference type="GO" id="GO:0009636">
    <property type="term" value="P:response to toxic substance"/>
    <property type="evidence" value="ECO:0007669"/>
    <property type="project" value="UniProtKB-KW"/>
</dbReference>
<dbReference type="Gene3D" id="3.10.450.50">
    <property type="match status" value="1"/>
</dbReference>
<dbReference type="InterPro" id="IPR032710">
    <property type="entry name" value="NTF2-like_dom_sf"/>
</dbReference>
<dbReference type="InterPro" id="IPR037401">
    <property type="entry name" value="SnoaL-like"/>
</dbReference>
<dbReference type="Pfam" id="PF13577">
    <property type="entry name" value="SnoaL_4"/>
    <property type="match status" value="1"/>
</dbReference>
<dbReference type="SUPFAM" id="SSF54427">
    <property type="entry name" value="NTF2-like"/>
    <property type="match status" value="1"/>
</dbReference>
<name>LINA1_SPHIB</name>
<accession>P59766</accession>
<accession>A0A1L5BUI1</accession>
<comment type="function">
    <text evidence="1 2">Catalyzes the conversion of the important environmental pollutant gamma-hexachlorocyclohexane (gamma-HCH or lindane) to 1,3,4,6-tetrachloro-1,4-cyclohexadiene (1,4-TCDN) via gamma-pentachlorocyclohexene (gamma-PCCH) (PubMed:12450824). Proceeds by two successive 1,2-anti conformationally dependent dehydrochlorinations (By similarity). Also shows activity with alpha- and delta-HCH, giving alpha- and delta-PCCH respectively, but not with the beta isomer (PubMed:12450824).</text>
</comment>
<comment type="catalytic activity">
    <reaction evidence="1 5">
        <text>gamma-hexachlorocyclohexane = (3R,4S,5S,6R)-pentachlorocyclohexene + chloride + H(+)</text>
        <dbReference type="Rhea" id="RHEA:45480"/>
        <dbReference type="ChEBI" id="CHEBI:10576"/>
        <dbReference type="ChEBI" id="CHEBI:15378"/>
        <dbReference type="ChEBI" id="CHEBI:17996"/>
        <dbReference type="ChEBI" id="CHEBI:32888"/>
    </reaction>
</comment>
<comment type="catalytic activity">
    <reaction evidence="1">
        <text>(3R,4S,5S,6R)-pentachlorocyclohexene = (3R,6R)-1,3,4,6-tetrachlorocyclohexa-1,4-diene + chloride + H(+)</text>
        <dbReference type="Rhea" id="RHEA:12152"/>
        <dbReference type="ChEBI" id="CHEBI:10576"/>
        <dbReference type="ChEBI" id="CHEBI:15378"/>
        <dbReference type="ChEBI" id="CHEBI:17996"/>
        <dbReference type="ChEBI" id="CHEBI:18904"/>
    </reaction>
</comment>
<comment type="pathway">
    <text evidence="2">Xenobiotic degradation; hexachlorocyclohexane degradation.</text>
</comment>
<comment type="subunit">
    <text evidence="1">Homotrimer.</text>
</comment>
<comment type="subcellular location">
    <subcellularLocation>
        <location evidence="1">Periplasm</location>
    </subcellularLocation>
</comment>
<comment type="miscellaneous">
    <text evidence="1">Is not N-terminally processed during export, so it may be secreted into the periplasmic space via a hitherto unknown mechanism.</text>
</comment>
<comment type="miscellaneous">
    <text evidence="4">Gamma-hexachlorocyclohexane (lindane) is an organochlorine insecticide which has been used worldwide since the 1940s. Because of its toxicity and long persistence in soil, most countries have prohibited the use of gamma-HCH. However, many contaminated sites still remain throughout the world.</text>
</comment>
<comment type="similarity">
    <text evidence="4">Belongs to the HCH dehydrochlorinase family.</text>
</comment>
<evidence type="ECO:0000250" key="1">
    <source>
        <dbReference type="UniProtKB" id="P51697"/>
    </source>
</evidence>
<evidence type="ECO:0000269" key="2">
    <source>
    </source>
</evidence>
<evidence type="ECO:0000303" key="3">
    <source>
    </source>
</evidence>
<evidence type="ECO:0000305" key="4"/>
<evidence type="ECO:0000305" key="5">
    <source>
    </source>
</evidence>
<evidence type="ECO:0000312" key="6">
    <source>
        <dbReference type="EMBL" id="APL96514.1"/>
    </source>
</evidence>